<gene>
    <name evidence="1" type="primary">dxs</name>
    <name type="ordered locus">PMM0907</name>
</gene>
<evidence type="ECO:0000255" key="1">
    <source>
        <dbReference type="HAMAP-Rule" id="MF_00315"/>
    </source>
</evidence>
<keyword id="KW-0414">Isoprene biosynthesis</keyword>
<keyword id="KW-0460">Magnesium</keyword>
<keyword id="KW-0479">Metal-binding</keyword>
<keyword id="KW-0784">Thiamine biosynthesis</keyword>
<keyword id="KW-0786">Thiamine pyrophosphate</keyword>
<keyword id="KW-0808">Transferase</keyword>
<organism>
    <name type="scientific">Prochlorococcus marinus subsp. pastoris (strain CCMP1986 / NIES-2087 / MED4)</name>
    <dbReference type="NCBI Taxonomy" id="59919"/>
    <lineage>
        <taxon>Bacteria</taxon>
        <taxon>Bacillati</taxon>
        <taxon>Cyanobacteriota</taxon>
        <taxon>Cyanophyceae</taxon>
        <taxon>Synechococcales</taxon>
        <taxon>Prochlorococcaceae</taxon>
        <taxon>Prochlorococcus</taxon>
    </lineage>
</organism>
<reference key="1">
    <citation type="journal article" date="2003" name="Nature">
        <title>Genome divergence in two Prochlorococcus ecotypes reflects oceanic niche differentiation.</title>
        <authorList>
            <person name="Rocap G."/>
            <person name="Larimer F.W."/>
            <person name="Lamerdin J.E."/>
            <person name="Malfatti S."/>
            <person name="Chain P."/>
            <person name="Ahlgren N.A."/>
            <person name="Arellano A."/>
            <person name="Coleman M."/>
            <person name="Hauser L."/>
            <person name="Hess W.R."/>
            <person name="Johnson Z.I."/>
            <person name="Land M.L."/>
            <person name="Lindell D."/>
            <person name="Post A.F."/>
            <person name="Regala W."/>
            <person name="Shah M."/>
            <person name="Shaw S.L."/>
            <person name="Steglich C."/>
            <person name="Sullivan M.B."/>
            <person name="Ting C.S."/>
            <person name="Tolonen A."/>
            <person name="Webb E.A."/>
            <person name="Zinser E.R."/>
            <person name="Chisholm S.W."/>
        </authorList>
    </citation>
    <scope>NUCLEOTIDE SEQUENCE [LARGE SCALE GENOMIC DNA]</scope>
    <source>
        <strain>CCMP1986 / NIES-2087 / MED4</strain>
    </source>
</reference>
<comment type="function">
    <text evidence="1">Catalyzes the acyloin condensation reaction between C atoms 2 and 3 of pyruvate and glyceraldehyde 3-phosphate to yield 1-deoxy-D-xylulose-5-phosphate (DXP).</text>
</comment>
<comment type="catalytic activity">
    <reaction evidence="1">
        <text>D-glyceraldehyde 3-phosphate + pyruvate + H(+) = 1-deoxy-D-xylulose 5-phosphate + CO2</text>
        <dbReference type="Rhea" id="RHEA:12605"/>
        <dbReference type="ChEBI" id="CHEBI:15361"/>
        <dbReference type="ChEBI" id="CHEBI:15378"/>
        <dbReference type="ChEBI" id="CHEBI:16526"/>
        <dbReference type="ChEBI" id="CHEBI:57792"/>
        <dbReference type="ChEBI" id="CHEBI:59776"/>
        <dbReference type="EC" id="2.2.1.7"/>
    </reaction>
</comment>
<comment type="cofactor">
    <cofactor evidence="1">
        <name>Mg(2+)</name>
        <dbReference type="ChEBI" id="CHEBI:18420"/>
    </cofactor>
    <text evidence="1">Binds 1 Mg(2+) ion per subunit.</text>
</comment>
<comment type="cofactor">
    <cofactor evidence="1">
        <name>thiamine diphosphate</name>
        <dbReference type="ChEBI" id="CHEBI:58937"/>
    </cofactor>
    <text evidence="1">Binds 1 thiamine pyrophosphate per subunit.</text>
</comment>
<comment type="pathway">
    <text evidence="1">Metabolic intermediate biosynthesis; 1-deoxy-D-xylulose 5-phosphate biosynthesis; 1-deoxy-D-xylulose 5-phosphate from D-glyceraldehyde 3-phosphate and pyruvate: step 1/1.</text>
</comment>
<comment type="subunit">
    <text evidence="1">Homodimer.</text>
</comment>
<comment type="similarity">
    <text evidence="1">Belongs to the transketolase family. DXPS subfamily.</text>
</comment>
<feature type="chain" id="PRO_0000189141" description="1-deoxy-D-xylulose-5-phosphate synthase">
    <location>
        <begin position="1"/>
        <end position="637"/>
    </location>
</feature>
<feature type="binding site" evidence="1">
    <location>
        <position position="72"/>
    </location>
    <ligand>
        <name>thiamine diphosphate</name>
        <dbReference type="ChEBI" id="CHEBI:58937"/>
    </ligand>
</feature>
<feature type="binding site" evidence="1">
    <location>
        <begin position="113"/>
        <end position="115"/>
    </location>
    <ligand>
        <name>thiamine diphosphate</name>
        <dbReference type="ChEBI" id="CHEBI:58937"/>
    </ligand>
</feature>
<feature type="binding site" evidence="1">
    <location>
        <position position="144"/>
    </location>
    <ligand>
        <name>Mg(2+)</name>
        <dbReference type="ChEBI" id="CHEBI:18420"/>
    </ligand>
</feature>
<feature type="binding site" evidence="1">
    <location>
        <begin position="145"/>
        <end position="146"/>
    </location>
    <ligand>
        <name>thiamine diphosphate</name>
        <dbReference type="ChEBI" id="CHEBI:58937"/>
    </ligand>
</feature>
<feature type="binding site" evidence="1">
    <location>
        <position position="174"/>
    </location>
    <ligand>
        <name>Mg(2+)</name>
        <dbReference type="ChEBI" id="CHEBI:18420"/>
    </ligand>
</feature>
<feature type="binding site" evidence="1">
    <location>
        <position position="174"/>
    </location>
    <ligand>
        <name>thiamine diphosphate</name>
        <dbReference type="ChEBI" id="CHEBI:58937"/>
    </ligand>
</feature>
<feature type="binding site" evidence="1">
    <location>
        <position position="287"/>
    </location>
    <ligand>
        <name>thiamine diphosphate</name>
        <dbReference type="ChEBI" id="CHEBI:58937"/>
    </ligand>
</feature>
<feature type="binding site" evidence="1">
    <location>
        <position position="370"/>
    </location>
    <ligand>
        <name>thiamine diphosphate</name>
        <dbReference type="ChEBI" id="CHEBI:58937"/>
    </ligand>
</feature>
<sequence length="637" mass="68936">MLLSELSHPNQLHGLTVSQLEEIACQIRERHLEVVSTSGGHLGPGLGVVELTLALYQTLDLDFDKVVWDVGHQAYPHKLITGRFNEFDSLRQQKGIAGYLKRSESHFDHFGAGHASTSISAALGMAIARDRKGEDHKCVAVIGDGALTGGMALEAINHAGHLPNTPLVVVLNDNDMSISPPVGALSTYLNRVRLSPPLQFLSDSVQESVKNIPLIGKDIPEELKNIKGSVRRLAVPKVGAVFEELGFTYMGPIDGHDISNLINTFNAAHRLKKPVMVHVVTTKGKGYPYAEADQVGYHAQSSFDLTTGKSIPSSKPKPVSYSKIFGQTLLKICEQDSKVIGITAAMATGTGLDLLQKNIPEQYIDVGIAEQHAVTLAAGMSCDGLKPVVAIYSTFLQRAFDQLIHDVGIQNLPVSFVLDRAGIVGADGPTHQGQYDISYMRAIPNFVLMAPKDEAELQRMLITSINYKGPTALRIPRGSGLGVAVMDEGWEPLKIGEGEILEEGDDVLIIAYGSMVQSATETANLLKNRGISACIINARFVRPLDQDLIIPLVRKLKKVVTMEEGTLVGGFGSAIVEMLNDNDINIPVLRIGIPDVLVDHASPDQSKEKLGLTPDQMAEKIINKFNLAKLNSKITVE</sequence>
<accession>Q7V1G6</accession>
<name>DXS_PROMP</name>
<proteinExistence type="inferred from homology"/>
<dbReference type="EC" id="2.2.1.7" evidence="1"/>
<dbReference type="EMBL" id="BX548174">
    <property type="protein sequence ID" value="CAE19366.1"/>
    <property type="molecule type" value="Genomic_DNA"/>
</dbReference>
<dbReference type="RefSeq" id="WP_011132540.1">
    <property type="nucleotide sequence ID" value="NC_005072.1"/>
</dbReference>
<dbReference type="SMR" id="Q7V1G6"/>
<dbReference type="STRING" id="59919.PMM0907"/>
<dbReference type="KEGG" id="pmm:PMM0907"/>
<dbReference type="eggNOG" id="COG1154">
    <property type="taxonomic scope" value="Bacteria"/>
</dbReference>
<dbReference type="HOGENOM" id="CLU_009227_1_4_3"/>
<dbReference type="OrthoDB" id="9803371at2"/>
<dbReference type="UniPathway" id="UPA00064">
    <property type="reaction ID" value="UER00091"/>
</dbReference>
<dbReference type="Proteomes" id="UP000001026">
    <property type="component" value="Chromosome"/>
</dbReference>
<dbReference type="GO" id="GO:0005829">
    <property type="term" value="C:cytosol"/>
    <property type="evidence" value="ECO:0007669"/>
    <property type="project" value="TreeGrafter"/>
</dbReference>
<dbReference type="GO" id="GO:0008661">
    <property type="term" value="F:1-deoxy-D-xylulose-5-phosphate synthase activity"/>
    <property type="evidence" value="ECO:0007669"/>
    <property type="project" value="UniProtKB-UniRule"/>
</dbReference>
<dbReference type="GO" id="GO:0000287">
    <property type="term" value="F:magnesium ion binding"/>
    <property type="evidence" value="ECO:0007669"/>
    <property type="project" value="UniProtKB-UniRule"/>
</dbReference>
<dbReference type="GO" id="GO:0030976">
    <property type="term" value="F:thiamine pyrophosphate binding"/>
    <property type="evidence" value="ECO:0007669"/>
    <property type="project" value="UniProtKB-UniRule"/>
</dbReference>
<dbReference type="GO" id="GO:0052865">
    <property type="term" value="P:1-deoxy-D-xylulose 5-phosphate biosynthetic process"/>
    <property type="evidence" value="ECO:0007669"/>
    <property type="project" value="UniProtKB-UniPathway"/>
</dbReference>
<dbReference type="GO" id="GO:0019288">
    <property type="term" value="P:isopentenyl diphosphate biosynthetic process, methylerythritol 4-phosphate pathway"/>
    <property type="evidence" value="ECO:0007669"/>
    <property type="project" value="TreeGrafter"/>
</dbReference>
<dbReference type="GO" id="GO:0016114">
    <property type="term" value="P:terpenoid biosynthetic process"/>
    <property type="evidence" value="ECO:0007669"/>
    <property type="project" value="UniProtKB-UniRule"/>
</dbReference>
<dbReference type="GO" id="GO:0009228">
    <property type="term" value="P:thiamine biosynthetic process"/>
    <property type="evidence" value="ECO:0007669"/>
    <property type="project" value="UniProtKB-UniRule"/>
</dbReference>
<dbReference type="CDD" id="cd02007">
    <property type="entry name" value="TPP_DXS"/>
    <property type="match status" value="1"/>
</dbReference>
<dbReference type="CDD" id="cd07033">
    <property type="entry name" value="TPP_PYR_DXS_TK_like"/>
    <property type="match status" value="1"/>
</dbReference>
<dbReference type="FunFam" id="3.40.50.920:FF:000002">
    <property type="entry name" value="1-deoxy-D-xylulose-5-phosphate synthase"/>
    <property type="match status" value="1"/>
</dbReference>
<dbReference type="FunFam" id="3.40.50.970:FF:000005">
    <property type="entry name" value="1-deoxy-D-xylulose-5-phosphate synthase"/>
    <property type="match status" value="1"/>
</dbReference>
<dbReference type="Gene3D" id="3.40.50.920">
    <property type="match status" value="1"/>
</dbReference>
<dbReference type="Gene3D" id="3.40.50.970">
    <property type="match status" value="2"/>
</dbReference>
<dbReference type="HAMAP" id="MF_00315">
    <property type="entry name" value="DXP_synth"/>
    <property type="match status" value="1"/>
</dbReference>
<dbReference type="InterPro" id="IPR005477">
    <property type="entry name" value="Dxylulose-5-P_synthase"/>
</dbReference>
<dbReference type="InterPro" id="IPR029061">
    <property type="entry name" value="THDP-binding"/>
</dbReference>
<dbReference type="InterPro" id="IPR009014">
    <property type="entry name" value="Transketo_C/PFOR_II"/>
</dbReference>
<dbReference type="InterPro" id="IPR005475">
    <property type="entry name" value="Transketolase-like_Pyr-bd"/>
</dbReference>
<dbReference type="InterPro" id="IPR020826">
    <property type="entry name" value="Transketolase_BS"/>
</dbReference>
<dbReference type="InterPro" id="IPR033248">
    <property type="entry name" value="Transketolase_C"/>
</dbReference>
<dbReference type="InterPro" id="IPR049557">
    <property type="entry name" value="Transketolase_CS"/>
</dbReference>
<dbReference type="NCBIfam" id="TIGR00204">
    <property type="entry name" value="dxs"/>
    <property type="match status" value="1"/>
</dbReference>
<dbReference type="NCBIfam" id="NF003933">
    <property type="entry name" value="PRK05444.2-2"/>
    <property type="match status" value="1"/>
</dbReference>
<dbReference type="PANTHER" id="PTHR43322">
    <property type="entry name" value="1-D-DEOXYXYLULOSE 5-PHOSPHATE SYNTHASE-RELATED"/>
    <property type="match status" value="1"/>
</dbReference>
<dbReference type="PANTHER" id="PTHR43322:SF5">
    <property type="entry name" value="1-DEOXY-D-XYLULOSE-5-PHOSPHATE SYNTHASE, CHLOROPLASTIC"/>
    <property type="match status" value="1"/>
</dbReference>
<dbReference type="Pfam" id="PF13292">
    <property type="entry name" value="DXP_synthase_N"/>
    <property type="match status" value="1"/>
</dbReference>
<dbReference type="Pfam" id="PF02779">
    <property type="entry name" value="Transket_pyr"/>
    <property type="match status" value="1"/>
</dbReference>
<dbReference type="Pfam" id="PF02780">
    <property type="entry name" value="Transketolase_C"/>
    <property type="match status" value="1"/>
</dbReference>
<dbReference type="SMART" id="SM00861">
    <property type="entry name" value="Transket_pyr"/>
    <property type="match status" value="1"/>
</dbReference>
<dbReference type="SUPFAM" id="SSF52518">
    <property type="entry name" value="Thiamin diphosphate-binding fold (THDP-binding)"/>
    <property type="match status" value="2"/>
</dbReference>
<dbReference type="SUPFAM" id="SSF52922">
    <property type="entry name" value="TK C-terminal domain-like"/>
    <property type="match status" value="1"/>
</dbReference>
<dbReference type="PROSITE" id="PS00801">
    <property type="entry name" value="TRANSKETOLASE_1"/>
    <property type="match status" value="1"/>
</dbReference>
<dbReference type="PROSITE" id="PS00802">
    <property type="entry name" value="TRANSKETOLASE_2"/>
    <property type="match status" value="1"/>
</dbReference>
<protein>
    <recommendedName>
        <fullName evidence="1">1-deoxy-D-xylulose-5-phosphate synthase</fullName>
        <ecNumber evidence="1">2.2.1.7</ecNumber>
    </recommendedName>
    <alternativeName>
        <fullName evidence="1">1-deoxyxylulose-5-phosphate synthase</fullName>
        <shortName evidence="1">DXP synthase</shortName>
        <shortName evidence="1">DXPS</shortName>
    </alternativeName>
</protein>